<keyword id="KW-0028">Amino-acid biosynthesis</keyword>
<keyword id="KW-0055">Arginine biosynthesis</keyword>
<keyword id="KW-0963">Cytoplasm</keyword>
<keyword id="KW-0521">NADP</keyword>
<keyword id="KW-0560">Oxidoreductase</keyword>
<protein>
    <recommendedName>
        <fullName evidence="1">N-acetyl-gamma-glutamyl-phosphate reductase</fullName>
        <shortName evidence="1">AGPR</shortName>
        <ecNumber evidence="1">1.2.1.38</ecNumber>
    </recommendedName>
    <alternativeName>
        <fullName evidence="1">N-acetyl-glutamate semialdehyde dehydrogenase</fullName>
        <shortName evidence="1">NAGSA dehydrogenase</shortName>
    </alternativeName>
</protein>
<name>ARGC_XYLF2</name>
<organism>
    <name type="scientific">Xylella fastidiosa (strain M23)</name>
    <dbReference type="NCBI Taxonomy" id="405441"/>
    <lineage>
        <taxon>Bacteria</taxon>
        <taxon>Pseudomonadati</taxon>
        <taxon>Pseudomonadota</taxon>
        <taxon>Gammaproteobacteria</taxon>
        <taxon>Lysobacterales</taxon>
        <taxon>Lysobacteraceae</taxon>
        <taxon>Xylella</taxon>
    </lineage>
</organism>
<reference key="1">
    <citation type="journal article" date="2010" name="J. Bacteriol.">
        <title>Whole genome sequences of two Xylella fastidiosa strains (M12 and M23) causing almond leaf scorch disease in California.</title>
        <authorList>
            <person name="Chen J."/>
            <person name="Xie G."/>
            <person name="Han S."/>
            <person name="Chertkov O."/>
            <person name="Sims D."/>
            <person name="Civerolo E.L."/>
        </authorList>
    </citation>
    <scope>NUCLEOTIDE SEQUENCE [LARGE SCALE GENOMIC DNA]</scope>
    <source>
        <strain>M23</strain>
    </source>
</reference>
<evidence type="ECO:0000255" key="1">
    <source>
        <dbReference type="HAMAP-Rule" id="MF_00150"/>
    </source>
</evidence>
<sequence length="327" mass="35371">MSTATFTLGIVGARGYTGAALITLLTAHPAIELIFVSSREYHGQPVAAHNPTYCGDLRFETLDPAAVAAKRADVVILALPNGNAAPYVHAIDATAPPTLIIDLSADTRFDPDWYYGLPELTRHTYTGQKRISNPGCYATAMQLAIAPLRDQLAGPPQCFGVSGYSGAGTTPSDKNNQALLRDNLMPYALTDHLHEREVSAQLGIPVEFMPHVAPHFRGITLTANLWLQRPLTREHIKTLYATRYANDPLIDIIDPPPWVNQIAARHTVQIGAFTMAPGNKRVVIVATLDNLLKGAATQALQNLNRALGLDELTAIPYQPNPVPSPIP</sequence>
<dbReference type="EC" id="1.2.1.38" evidence="1"/>
<dbReference type="EMBL" id="CP001011">
    <property type="protein sequence ID" value="ACB91737.1"/>
    <property type="molecule type" value="Genomic_DNA"/>
</dbReference>
<dbReference type="RefSeq" id="WP_011097577.1">
    <property type="nucleotide sequence ID" value="NC_010577.1"/>
</dbReference>
<dbReference type="SMR" id="B2I7K9"/>
<dbReference type="GeneID" id="93903996"/>
<dbReference type="KEGG" id="xfn:XfasM23_0288"/>
<dbReference type="HOGENOM" id="CLU_006384_3_0_6"/>
<dbReference type="UniPathway" id="UPA00068">
    <property type="reaction ID" value="UER00108"/>
</dbReference>
<dbReference type="Proteomes" id="UP000001698">
    <property type="component" value="Chromosome"/>
</dbReference>
<dbReference type="GO" id="GO:0005737">
    <property type="term" value="C:cytoplasm"/>
    <property type="evidence" value="ECO:0007669"/>
    <property type="project" value="UniProtKB-SubCell"/>
</dbReference>
<dbReference type="GO" id="GO:0003942">
    <property type="term" value="F:N-acetyl-gamma-glutamyl-phosphate reductase activity"/>
    <property type="evidence" value="ECO:0007669"/>
    <property type="project" value="UniProtKB-UniRule"/>
</dbReference>
<dbReference type="GO" id="GO:0051287">
    <property type="term" value="F:NAD binding"/>
    <property type="evidence" value="ECO:0007669"/>
    <property type="project" value="InterPro"/>
</dbReference>
<dbReference type="GO" id="GO:0070401">
    <property type="term" value="F:NADP+ binding"/>
    <property type="evidence" value="ECO:0007669"/>
    <property type="project" value="InterPro"/>
</dbReference>
<dbReference type="GO" id="GO:0006526">
    <property type="term" value="P:L-arginine biosynthetic process"/>
    <property type="evidence" value="ECO:0007669"/>
    <property type="project" value="UniProtKB-UniRule"/>
</dbReference>
<dbReference type="CDD" id="cd23936">
    <property type="entry name" value="AGPR_C_ARG5_6_like"/>
    <property type="match status" value="1"/>
</dbReference>
<dbReference type="CDD" id="cd24149">
    <property type="entry name" value="AGPR_N_ARG5_6_like"/>
    <property type="match status" value="1"/>
</dbReference>
<dbReference type="Gene3D" id="3.30.360.10">
    <property type="entry name" value="Dihydrodipicolinate Reductase, domain 2"/>
    <property type="match status" value="1"/>
</dbReference>
<dbReference type="Gene3D" id="3.40.50.720">
    <property type="entry name" value="NAD(P)-binding Rossmann-like Domain"/>
    <property type="match status" value="1"/>
</dbReference>
<dbReference type="HAMAP" id="MF_00150">
    <property type="entry name" value="ArgC_type1"/>
    <property type="match status" value="1"/>
</dbReference>
<dbReference type="InterPro" id="IPR023013">
    <property type="entry name" value="AGPR_AS"/>
</dbReference>
<dbReference type="InterPro" id="IPR000706">
    <property type="entry name" value="AGPR_type-1"/>
</dbReference>
<dbReference type="InterPro" id="IPR036291">
    <property type="entry name" value="NAD(P)-bd_dom_sf"/>
</dbReference>
<dbReference type="InterPro" id="IPR050085">
    <property type="entry name" value="NAGSA_dehydrogenase"/>
</dbReference>
<dbReference type="InterPro" id="IPR000534">
    <property type="entry name" value="Semialdehyde_DH_NAD-bd"/>
</dbReference>
<dbReference type="NCBIfam" id="TIGR01850">
    <property type="entry name" value="argC"/>
    <property type="match status" value="1"/>
</dbReference>
<dbReference type="PANTHER" id="PTHR32338:SF10">
    <property type="entry name" value="N-ACETYL-GAMMA-GLUTAMYL-PHOSPHATE REDUCTASE, CHLOROPLASTIC-RELATED"/>
    <property type="match status" value="1"/>
</dbReference>
<dbReference type="PANTHER" id="PTHR32338">
    <property type="entry name" value="N-ACETYL-GAMMA-GLUTAMYL-PHOSPHATE REDUCTASE, CHLOROPLASTIC-RELATED-RELATED"/>
    <property type="match status" value="1"/>
</dbReference>
<dbReference type="Pfam" id="PF01118">
    <property type="entry name" value="Semialdhyde_dh"/>
    <property type="match status" value="1"/>
</dbReference>
<dbReference type="Pfam" id="PF22698">
    <property type="entry name" value="Semialdhyde_dhC_1"/>
    <property type="match status" value="1"/>
</dbReference>
<dbReference type="SMART" id="SM00859">
    <property type="entry name" value="Semialdhyde_dh"/>
    <property type="match status" value="1"/>
</dbReference>
<dbReference type="SUPFAM" id="SSF55347">
    <property type="entry name" value="Glyceraldehyde-3-phosphate dehydrogenase-like, C-terminal domain"/>
    <property type="match status" value="1"/>
</dbReference>
<dbReference type="SUPFAM" id="SSF51735">
    <property type="entry name" value="NAD(P)-binding Rossmann-fold domains"/>
    <property type="match status" value="1"/>
</dbReference>
<dbReference type="PROSITE" id="PS01224">
    <property type="entry name" value="ARGC"/>
    <property type="match status" value="1"/>
</dbReference>
<proteinExistence type="inferred from homology"/>
<feature type="chain" id="PRO_1000096750" description="N-acetyl-gamma-glutamyl-phosphate reductase">
    <location>
        <begin position="1"/>
        <end position="327"/>
    </location>
</feature>
<feature type="active site" evidence="1">
    <location>
        <position position="136"/>
    </location>
</feature>
<comment type="function">
    <text evidence="1">Catalyzes the NADPH-dependent reduction of N-acetyl-5-glutamyl phosphate to yield N-acetyl-L-glutamate 5-semialdehyde.</text>
</comment>
<comment type="catalytic activity">
    <reaction evidence="1">
        <text>N-acetyl-L-glutamate 5-semialdehyde + phosphate + NADP(+) = N-acetyl-L-glutamyl 5-phosphate + NADPH + H(+)</text>
        <dbReference type="Rhea" id="RHEA:21588"/>
        <dbReference type="ChEBI" id="CHEBI:15378"/>
        <dbReference type="ChEBI" id="CHEBI:29123"/>
        <dbReference type="ChEBI" id="CHEBI:43474"/>
        <dbReference type="ChEBI" id="CHEBI:57783"/>
        <dbReference type="ChEBI" id="CHEBI:57936"/>
        <dbReference type="ChEBI" id="CHEBI:58349"/>
        <dbReference type="EC" id="1.2.1.38"/>
    </reaction>
</comment>
<comment type="pathway">
    <text evidence="1">Amino-acid biosynthesis; L-arginine biosynthesis; N(2)-acetyl-L-ornithine from L-glutamate: step 3/4.</text>
</comment>
<comment type="subcellular location">
    <subcellularLocation>
        <location evidence="1">Cytoplasm</location>
    </subcellularLocation>
</comment>
<comment type="similarity">
    <text evidence="1">Belongs to the NAGSA dehydrogenase family. Type 1 subfamily.</text>
</comment>
<accession>B2I7K9</accession>
<gene>
    <name evidence="1" type="primary">argC</name>
    <name type="ordered locus">XfasM23_0288</name>
</gene>